<gene>
    <name evidence="1" type="primary">greA</name>
    <name type="ordered locus">Rleg2_2715</name>
</gene>
<feature type="chain" id="PRO_1000094190" description="Transcription elongation factor GreA">
    <location>
        <begin position="1"/>
        <end position="158"/>
    </location>
</feature>
<evidence type="ECO:0000255" key="1">
    <source>
        <dbReference type="HAMAP-Rule" id="MF_00105"/>
    </source>
</evidence>
<organism>
    <name type="scientific">Rhizobium leguminosarum bv. trifolii (strain WSM2304)</name>
    <dbReference type="NCBI Taxonomy" id="395492"/>
    <lineage>
        <taxon>Bacteria</taxon>
        <taxon>Pseudomonadati</taxon>
        <taxon>Pseudomonadota</taxon>
        <taxon>Alphaproteobacteria</taxon>
        <taxon>Hyphomicrobiales</taxon>
        <taxon>Rhizobiaceae</taxon>
        <taxon>Rhizobium/Agrobacterium group</taxon>
        <taxon>Rhizobium</taxon>
    </lineage>
</organism>
<keyword id="KW-0238">DNA-binding</keyword>
<keyword id="KW-1185">Reference proteome</keyword>
<keyword id="KW-0804">Transcription</keyword>
<keyword id="KW-0805">Transcription regulation</keyword>
<reference key="1">
    <citation type="journal article" date="2010" name="Stand. Genomic Sci.">
        <title>Complete genome sequence of Rhizobium leguminosarum bv trifolii strain WSM2304, an effective microsymbiont of the South American clover Trifolium polymorphum.</title>
        <authorList>
            <person name="Reeve W."/>
            <person name="O'Hara G."/>
            <person name="Chain P."/>
            <person name="Ardley J."/>
            <person name="Brau L."/>
            <person name="Nandesena K."/>
            <person name="Tiwari R."/>
            <person name="Malfatti S."/>
            <person name="Kiss H."/>
            <person name="Lapidus A."/>
            <person name="Copeland A."/>
            <person name="Nolan M."/>
            <person name="Land M."/>
            <person name="Ivanova N."/>
            <person name="Mavromatis K."/>
            <person name="Markowitz V."/>
            <person name="Kyrpides N."/>
            <person name="Melino V."/>
            <person name="Denton M."/>
            <person name="Yates R."/>
            <person name="Howieson J."/>
        </authorList>
    </citation>
    <scope>NUCLEOTIDE SEQUENCE [LARGE SCALE GENOMIC DNA]</scope>
    <source>
        <strain>WSM2304</strain>
    </source>
</reference>
<name>GREA_RHILW</name>
<sequence length="158" mass="17431">MVEKVPMTPGGFVKLQEELRWRQQEERPRIIEAIAEARAHGDLSENAEYHAAKEAQSHNEGRISELEDLTARAEVIDLTKMSGDKIKFGAKVKLVDEDTEEEKTYQIVGDQEADVKAGRISISSPIARALIGKEVGDSIEVNAPGGSKAYEILQVSWG</sequence>
<proteinExistence type="inferred from homology"/>
<comment type="function">
    <text evidence="1">Necessary for efficient RNA polymerase transcription elongation past template-encoded arresting sites. The arresting sites in DNA have the property of trapping a certain fraction of elongating RNA polymerases that pass through, resulting in locked ternary complexes. Cleavage of the nascent transcript by cleavage factors such as GreA or GreB allows the resumption of elongation from the new 3'terminus. GreA releases sequences of 2 to 3 nucleotides.</text>
</comment>
<comment type="similarity">
    <text evidence="1">Belongs to the GreA/GreB family.</text>
</comment>
<dbReference type="EMBL" id="CP001191">
    <property type="protein sequence ID" value="ACI55986.1"/>
    <property type="molecule type" value="Genomic_DNA"/>
</dbReference>
<dbReference type="RefSeq" id="WP_003565408.1">
    <property type="nucleotide sequence ID" value="NC_011369.1"/>
</dbReference>
<dbReference type="SMR" id="B5ZXG2"/>
<dbReference type="STRING" id="395492.Rleg2_2715"/>
<dbReference type="KEGG" id="rlt:Rleg2_2715"/>
<dbReference type="eggNOG" id="COG0782">
    <property type="taxonomic scope" value="Bacteria"/>
</dbReference>
<dbReference type="HOGENOM" id="CLU_101379_2_0_5"/>
<dbReference type="Proteomes" id="UP000008330">
    <property type="component" value="Chromosome"/>
</dbReference>
<dbReference type="GO" id="GO:0003677">
    <property type="term" value="F:DNA binding"/>
    <property type="evidence" value="ECO:0007669"/>
    <property type="project" value="UniProtKB-UniRule"/>
</dbReference>
<dbReference type="GO" id="GO:0070063">
    <property type="term" value="F:RNA polymerase binding"/>
    <property type="evidence" value="ECO:0007669"/>
    <property type="project" value="InterPro"/>
</dbReference>
<dbReference type="GO" id="GO:0006354">
    <property type="term" value="P:DNA-templated transcription elongation"/>
    <property type="evidence" value="ECO:0007669"/>
    <property type="project" value="TreeGrafter"/>
</dbReference>
<dbReference type="GO" id="GO:0032784">
    <property type="term" value="P:regulation of DNA-templated transcription elongation"/>
    <property type="evidence" value="ECO:0007669"/>
    <property type="project" value="UniProtKB-UniRule"/>
</dbReference>
<dbReference type="FunFam" id="1.10.287.180:FF:000001">
    <property type="entry name" value="Transcription elongation factor GreA"/>
    <property type="match status" value="1"/>
</dbReference>
<dbReference type="FunFam" id="3.10.50.30:FF:000001">
    <property type="entry name" value="Transcription elongation factor GreA"/>
    <property type="match status" value="1"/>
</dbReference>
<dbReference type="Gene3D" id="3.10.50.30">
    <property type="entry name" value="Transcription elongation factor, GreA/GreB, C-terminal domain"/>
    <property type="match status" value="1"/>
</dbReference>
<dbReference type="Gene3D" id="1.10.287.180">
    <property type="entry name" value="Transcription elongation factor, GreA/GreB, N-terminal domain"/>
    <property type="match status" value="1"/>
</dbReference>
<dbReference type="HAMAP" id="MF_00105">
    <property type="entry name" value="GreA_GreB"/>
    <property type="match status" value="1"/>
</dbReference>
<dbReference type="InterPro" id="IPR036953">
    <property type="entry name" value="GreA/GreB_C_sf"/>
</dbReference>
<dbReference type="InterPro" id="IPR018151">
    <property type="entry name" value="TF_GreA/GreB_CS"/>
</dbReference>
<dbReference type="InterPro" id="IPR006359">
    <property type="entry name" value="Tscrpt_elong_fac_GreA"/>
</dbReference>
<dbReference type="InterPro" id="IPR028624">
    <property type="entry name" value="Tscrpt_elong_fac_GreA/B"/>
</dbReference>
<dbReference type="InterPro" id="IPR001437">
    <property type="entry name" value="Tscrpt_elong_fac_GreA/B_C"/>
</dbReference>
<dbReference type="InterPro" id="IPR023459">
    <property type="entry name" value="Tscrpt_elong_fac_GreA/B_fam"/>
</dbReference>
<dbReference type="InterPro" id="IPR022691">
    <property type="entry name" value="Tscrpt_elong_fac_GreA/B_N"/>
</dbReference>
<dbReference type="InterPro" id="IPR036805">
    <property type="entry name" value="Tscrpt_elong_fac_GreA/B_N_sf"/>
</dbReference>
<dbReference type="NCBIfam" id="TIGR01462">
    <property type="entry name" value="greA"/>
    <property type="match status" value="1"/>
</dbReference>
<dbReference type="NCBIfam" id="NF001261">
    <property type="entry name" value="PRK00226.1-2"/>
    <property type="match status" value="1"/>
</dbReference>
<dbReference type="NCBIfam" id="NF001263">
    <property type="entry name" value="PRK00226.1-4"/>
    <property type="match status" value="1"/>
</dbReference>
<dbReference type="NCBIfam" id="NF001264">
    <property type="entry name" value="PRK00226.1-5"/>
    <property type="match status" value="1"/>
</dbReference>
<dbReference type="PANTHER" id="PTHR30437">
    <property type="entry name" value="TRANSCRIPTION ELONGATION FACTOR GREA"/>
    <property type="match status" value="1"/>
</dbReference>
<dbReference type="PANTHER" id="PTHR30437:SF4">
    <property type="entry name" value="TRANSCRIPTION ELONGATION FACTOR GREA"/>
    <property type="match status" value="1"/>
</dbReference>
<dbReference type="Pfam" id="PF01272">
    <property type="entry name" value="GreA_GreB"/>
    <property type="match status" value="1"/>
</dbReference>
<dbReference type="Pfam" id="PF03449">
    <property type="entry name" value="GreA_GreB_N"/>
    <property type="match status" value="1"/>
</dbReference>
<dbReference type="PIRSF" id="PIRSF006092">
    <property type="entry name" value="GreA_GreB"/>
    <property type="match status" value="1"/>
</dbReference>
<dbReference type="SUPFAM" id="SSF54534">
    <property type="entry name" value="FKBP-like"/>
    <property type="match status" value="1"/>
</dbReference>
<dbReference type="SUPFAM" id="SSF46557">
    <property type="entry name" value="GreA transcript cleavage protein, N-terminal domain"/>
    <property type="match status" value="1"/>
</dbReference>
<dbReference type="PROSITE" id="PS00829">
    <property type="entry name" value="GREAB_1"/>
    <property type="match status" value="1"/>
</dbReference>
<dbReference type="PROSITE" id="PS00830">
    <property type="entry name" value="GREAB_2"/>
    <property type="match status" value="1"/>
</dbReference>
<protein>
    <recommendedName>
        <fullName evidence="1">Transcription elongation factor GreA</fullName>
    </recommendedName>
    <alternativeName>
        <fullName evidence="1">Transcript cleavage factor GreA</fullName>
    </alternativeName>
</protein>
<accession>B5ZXG2</accession>